<feature type="chain" id="PRO_1000137696" description="Chaperone protein DnaJ">
    <location>
        <begin position="1"/>
        <end position="387"/>
    </location>
</feature>
<feature type="domain" description="J" evidence="1">
    <location>
        <begin position="6"/>
        <end position="70"/>
    </location>
</feature>
<feature type="repeat" description="CXXCXGXG motif">
    <location>
        <begin position="156"/>
        <end position="163"/>
    </location>
</feature>
<feature type="repeat" description="CXXCXGXG motif">
    <location>
        <begin position="173"/>
        <end position="180"/>
    </location>
</feature>
<feature type="repeat" description="CXXCXGXG motif">
    <location>
        <begin position="199"/>
        <end position="206"/>
    </location>
</feature>
<feature type="repeat" description="CXXCXGXG motif">
    <location>
        <begin position="213"/>
        <end position="220"/>
    </location>
</feature>
<feature type="zinc finger region" description="CR-type" evidence="1">
    <location>
        <begin position="143"/>
        <end position="225"/>
    </location>
</feature>
<feature type="binding site" evidence="1">
    <location>
        <position position="156"/>
    </location>
    <ligand>
        <name>Zn(2+)</name>
        <dbReference type="ChEBI" id="CHEBI:29105"/>
        <label>1</label>
    </ligand>
</feature>
<feature type="binding site" evidence="1">
    <location>
        <position position="159"/>
    </location>
    <ligand>
        <name>Zn(2+)</name>
        <dbReference type="ChEBI" id="CHEBI:29105"/>
        <label>1</label>
    </ligand>
</feature>
<feature type="binding site" evidence="1">
    <location>
        <position position="173"/>
    </location>
    <ligand>
        <name>Zn(2+)</name>
        <dbReference type="ChEBI" id="CHEBI:29105"/>
        <label>2</label>
    </ligand>
</feature>
<feature type="binding site" evidence="1">
    <location>
        <position position="176"/>
    </location>
    <ligand>
        <name>Zn(2+)</name>
        <dbReference type="ChEBI" id="CHEBI:29105"/>
        <label>2</label>
    </ligand>
</feature>
<feature type="binding site" evidence="1">
    <location>
        <position position="199"/>
    </location>
    <ligand>
        <name>Zn(2+)</name>
        <dbReference type="ChEBI" id="CHEBI:29105"/>
        <label>2</label>
    </ligand>
</feature>
<feature type="binding site" evidence="1">
    <location>
        <position position="202"/>
    </location>
    <ligand>
        <name>Zn(2+)</name>
        <dbReference type="ChEBI" id="CHEBI:29105"/>
        <label>2</label>
    </ligand>
</feature>
<feature type="binding site" evidence="1">
    <location>
        <position position="213"/>
    </location>
    <ligand>
        <name>Zn(2+)</name>
        <dbReference type="ChEBI" id="CHEBI:29105"/>
        <label>1</label>
    </ligand>
</feature>
<feature type="binding site" evidence="1">
    <location>
        <position position="216"/>
    </location>
    <ligand>
        <name>Zn(2+)</name>
        <dbReference type="ChEBI" id="CHEBI:29105"/>
        <label>1</label>
    </ligand>
</feature>
<protein>
    <recommendedName>
        <fullName evidence="1">Chaperone protein DnaJ</fullName>
    </recommendedName>
</protein>
<evidence type="ECO:0000255" key="1">
    <source>
        <dbReference type="HAMAP-Rule" id="MF_01152"/>
    </source>
</evidence>
<keyword id="KW-0143">Chaperone</keyword>
<keyword id="KW-0963">Cytoplasm</keyword>
<keyword id="KW-0235">DNA replication</keyword>
<keyword id="KW-0479">Metal-binding</keyword>
<keyword id="KW-0677">Repeat</keyword>
<keyword id="KW-0346">Stress response</keyword>
<keyword id="KW-0862">Zinc</keyword>
<keyword id="KW-0863">Zinc-finger</keyword>
<organism>
    <name type="scientific">Lacticaseibacillus casei (strain BL23)</name>
    <name type="common">Lactobacillus casei</name>
    <dbReference type="NCBI Taxonomy" id="543734"/>
    <lineage>
        <taxon>Bacteria</taxon>
        <taxon>Bacillati</taxon>
        <taxon>Bacillota</taxon>
        <taxon>Bacilli</taxon>
        <taxon>Lactobacillales</taxon>
        <taxon>Lactobacillaceae</taxon>
        <taxon>Lacticaseibacillus</taxon>
    </lineage>
</organism>
<reference key="1">
    <citation type="submission" date="2008-06" db="EMBL/GenBank/DDBJ databases">
        <title>Lactobacillus casei BL23 complete genome sequence.</title>
        <authorList>
            <person name="Maze A."/>
            <person name="Boel G."/>
            <person name="Bourand A."/>
            <person name="Loux V."/>
            <person name="Gibrat J.F."/>
            <person name="Zuniga M."/>
            <person name="Hartke A."/>
            <person name="Deutscher J."/>
        </authorList>
    </citation>
    <scope>NUCLEOTIDE SEQUENCE [LARGE SCALE GENOMIC DNA]</scope>
    <source>
        <strain>BL23</strain>
    </source>
</reference>
<proteinExistence type="inferred from homology"/>
<name>DNAJ_LACCB</name>
<gene>
    <name evidence="1" type="primary">dnaJ</name>
    <name type="ordered locus">LCABL_17770</name>
</gene>
<dbReference type="EMBL" id="FM177140">
    <property type="protein sequence ID" value="CAQ66857.1"/>
    <property type="molecule type" value="Genomic_DNA"/>
</dbReference>
<dbReference type="SMR" id="B3WEQ6"/>
<dbReference type="KEGG" id="lcb:LCABL_17770"/>
<dbReference type="HOGENOM" id="CLU_017633_0_7_9"/>
<dbReference type="GO" id="GO:0005737">
    <property type="term" value="C:cytoplasm"/>
    <property type="evidence" value="ECO:0007669"/>
    <property type="project" value="UniProtKB-SubCell"/>
</dbReference>
<dbReference type="GO" id="GO:0005524">
    <property type="term" value="F:ATP binding"/>
    <property type="evidence" value="ECO:0007669"/>
    <property type="project" value="InterPro"/>
</dbReference>
<dbReference type="GO" id="GO:0031072">
    <property type="term" value="F:heat shock protein binding"/>
    <property type="evidence" value="ECO:0007669"/>
    <property type="project" value="InterPro"/>
</dbReference>
<dbReference type="GO" id="GO:0051082">
    <property type="term" value="F:unfolded protein binding"/>
    <property type="evidence" value="ECO:0007669"/>
    <property type="project" value="UniProtKB-UniRule"/>
</dbReference>
<dbReference type="GO" id="GO:0008270">
    <property type="term" value="F:zinc ion binding"/>
    <property type="evidence" value="ECO:0007669"/>
    <property type="project" value="UniProtKB-UniRule"/>
</dbReference>
<dbReference type="GO" id="GO:0051085">
    <property type="term" value="P:chaperone cofactor-dependent protein refolding"/>
    <property type="evidence" value="ECO:0007669"/>
    <property type="project" value="TreeGrafter"/>
</dbReference>
<dbReference type="GO" id="GO:0006260">
    <property type="term" value="P:DNA replication"/>
    <property type="evidence" value="ECO:0007669"/>
    <property type="project" value="UniProtKB-KW"/>
</dbReference>
<dbReference type="GO" id="GO:0042026">
    <property type="term" value="P:protein refolding"/>
    <property type="evidence" value="ECO:0007669"/>
    <property type="project" value="TreeGrafter"/>
</dbReference>
<dbReference type="GO" id="GO:0009408">
    <property type="term" value="P:response to heat"/>
    <property type="evidence" value="ECO:0007669"/>
    <property type="project" value="InterPro"/>
</dbReference>
<dbReference type="CDD" id="cd06257">
    <property type="entry name" value="DnaJ"/>
    <property type="match status" value="1"/>
</dbReference>
<dbReference type="CDD" id="cd10747">
    <property type="entry name" value="DnaJ_C"/>
    <property type="match status" value="1"/>
</dbReference>
<dbReference type="CDD" id="cd10719">
    <property type="entry name" value="DnaJ_zf"/>
    <property type="match status" value="1"/>
</dbReference>
<dbReference type="FunFam" id="1.10.287.110:FF:000031">
    <property type="entry name" value="Molecular chaperone DnaJ"/>
    <property type="match status" value="1"/>
</dbReference>
<dbReference type="FunFam" id="2.10.230.10:FF:000002">
    <property type="entry name" value="Molecular chaperone DnaJ"/>
    <property type="match status" value="1"/>
</dbReference>
<dbReference type="FunFam" id="2.60.260.20:FF:000004">
    <property type="entry name" value="Molecular chaperone DnaJ"/>
    <property type="match status" value="1"/>
</dbReference>
<dbReference type="Gene3D" id="1.10.287.110">
    <property type="entry name" value="DnaJ domain"/>
    <property type="match status" value="1"/>
</dbReference>
<dbReference type="Gene3D" id="2.10.230.10">
    <property type="entry name" value="Heat shock protein DnaJ, cysteine-rich domain"/>
    <property type="match status" value="1"/>
</dbReference>
<dbReference type="Gene3D" id="2.60.260.20">
    <property type="entry name" value="Urease metallochaperone UreE, N-terminal domain"/>
    <property type="match status" value="2"/>
</dbReference>
<dbReference type="HAMAP" id="MF_01152">
    <property type="entry name" value="DnaJ"/>
    <property type="match status" value="1"/>
</dbReference>
<dbReference type="InterPro" id="IPR012724">
    <property type="entry name" value="DnaJ"/>
</dbReference>
<dbReference type="InterPro" id="IPR002939">
    <property type="entry name" value="DnaJ_C"/>
</dbReference>
<dbReference type="InterPro" id="IPR001623">
    <property type="entry name" value="DnaJ_domain"/>
</dbReference>
<dbReference type="InterPro" id="IPR018253">
    <property type="entry name" value="DnaJ_domain_CS"/>
</dbReference>
<dbReference type="InterPro" id="IPR008971">
    <property type="entry name" value="HSP40/DnaJ_pept-bd"/>
</dbReference>
<dbReference type="InterPro" id="IPR001305">
    <property type="entry name" value="HSP_DnaJ_Cys-rich_dom"/>
</dbReference>
<dbReference type="InterPro" id="IPR036410">
    <property type="entry name" value="HSP_DnaJ_Cys-rich_dom_sf"/>
</dbReference>
<dbReference type="InterPro" id="IPR036869">
    <property type="entry name" value="J_dom_sf"/>
</dbReference>
<dbReference type="NCBIfam" id="TIGR02349">
    <property type="entry name" value="DnaJ_bact"/>
    <property type="match status" value="1"/>
</dbReference>
<dbReference type="NCBIfam" id="NF008035">
    <property type="entry name" value="PRK10767.1"/>
    <property type="match status" value="1"/>
</dbReference>
<dbReference type="NCBIfam" id="NF010869">
    <property type="entry name" value="PRK14276.1"/>
    <property type="match status" value="1"/>
</dbReference>
<dbReference type="PANTHER" id="PTHR43096:SF48">
    <property type="entry name" value="CHAPERONE PROTEIN DNAJ"/>
    <property type="match status" value="1"/>
</dbReference>
<dbReference type="PANTHER" id="PTHR43096">
    <property type="entry name" value="DNAJ HOMOLOG 1, MITOCHONDRIAL-RELATED"/>
    <property type="match status" value="1"/>
</dbReference>
<dbReference type="Pfam" id="PF00226">
    <property type="entry name" value="DnaJ"/>
    <property type="match status" value="1"/>
</dbReference>
<dbReference type="Pfam" id="PF01556">
    <property type="entry name" value="DnaJ_C"/>
    <property type="match status" value="1"/>
</dbReference>
<dbReference type="Pfam" id="PF00684">
    <property type="entry name" value="DnaJ_CXXCXGXG"/>
    <property type="match status" value="1"/>
</dbReference>
<dbReference type="PRINTS" id="PR00625">
    <property type="entry name" value="JDOMAIN"/>
</dbReference>
<dbReference type="SMART" id="SM00271">
    <property type="entry name" value="DnaJ"/>
    <property type="match status" value="1"/>
</dbReference>
<dbReference type="SUPFAM" id="SSF46565">
    <property type="entry name" value="Chaperone J-domain"/>
    <property type="match status" value="1"/>
</dbReference>
<dbReference type="SUPFAM" id="SSF57938">
    <property type="entry name" value="DnaJ/Hsp40 cysteine-rich domain"/>
    <property type="match status" value="1"/>
</dbReference>
<dbReference type="SUPFAM" id="SSF49493">
    <property type="entry name" value="HSP40/DnaJ peptide-binding domain"/>
    <property type="match status" value="2"/>
</dbReference>
<dbReference type="PROSITE" id="PS00636">
    <property type="entry name" value="DNAJ_1"/>
    <property type="match status" value="1"/>
</dbReference>
<dbReference type="PROSITE" id="PS50076">
    <property type="entry name" value="DNAJ_2"/>
    <property type="match status" value="1"/>
</dbReference>
<dbReference type="PROSITE" id="PS51188">
    <property type="entry name" value="ZF_CR"/>
    <property type="match status" value="1"/>
</dbReference>
<accession>B3WEQ6</accession>
<comment type="function">
    <text evidence="1">Participates actively in the response to hyperosmotic and heat shock by preventing the aggregation of stress-denatured proteins and by disaggregating proteins, also in an autonomous, DnaK-independent fashion. Unfolded proteins bind initially to DnaJ; upon interaction with the DnaJ-bound protein, DnaK hydrolyzes its bound ATP, resulting in the formation of a stable complex. GrpE releases ADP from DnaK; ATP binding to DnaK triggers the release of the substrate protein, thus completing the reaction cycle. Several rounds of ATP-dependent interactions between DnaJ, DnaK and GrpE are required for fully efficient folding. Also involved, together with DnaK and GrpE, in the DNA replication of plasmids through activation of initiation proteins.</text>
</comment>
<comment type="cofactor">
    <cofactor evidence="1">
        <name>Zn(2+)</name>
        <dbReference type="ChEBI" id="CHEBI:29105"/>
    </cofactor>
    <text evidence="1">Binds 2 Zn(2+) ions per monomer.</text>
</comment>
<comment type="subunit">
    <text evidence="1">Homodimer.</text>
</comment>
<comment type="subcellular location">
    <subcellularLocation>
        <location evidence="1">Cytoplasm</location>
    </subcellularLocation>
</comment>
<comment type="domain">
    <text evidence="1">The J domain is necessary and sufficient to stimulate DnaK ATPase activity. Zinc center 1 plays an important role in the autonomous, DnaK-independent chaperone activity of DnaJ. Zinc center 2 is essential for interaction with DnaK and for DnaJ activity.</text>
</comment>
<comment type="similarity">
    <text evidence="1">Belongs to the DnaJ family.</text>
</comment>
<sequence>MADQKDYYETLGVSRDADDDTIRKAFRKLSKKYHPDLNHAPGAEQKFKDINEAYQVLSDPQKRAAYDQYGSADGPQGFGGAGAGQGGFSDFGGGQGGFGGFDDIFSQFFGGAGGGAQANPSAPRQGADLQYRMDLTFEEAIFGKDTKISYDREAVCHTCNGSGAKPGTSPVTCHKCHGSGYIQVQRNTAFGAMMTRQVCDVCGGTGKEIKEKCPTCHGTGHEQERHTIDVKVPAGVEDGQQMRLQQAGEAGTNGGPYGDLYIVFRVAPSKKYQRDGSEIYLTIPLSFAQAALGDEIKVDTVHGAVELKIPAGTQSQTKFRLRGKGAPRLRGNGTGDQIVTVEVQTPKHLNEKQKSALMQFAAASGEDVTPHNGTLFDRVKEAFKGGK</sequence>